<organism>
    <name type="scientific">Sinorhizobium fredii (strain NBRC 101917 / NGR234)</name>
    <dbReference type="NCBI Taxonomy" id="394"/>
    <lineage>
        <taxon>Bacteria</taxon>
        <taxon>Pseudomonadati</taxon>
        <taxon>Pseudomonadota</taxon>
        <taxon>Alphaproteobacteria</taxon>
        <taxon>Hyphomicrobiales</taxon>
        <taxon>Rhizobiaceae</taxon>
        <taxon>Sinorhizobium/Ensifer group</taxon>
        <taxon>Sinorhizobium</taxon>
    </lineage>
</organism>
<accession>P55383</accession>
<sequence length="1197" mass="133714">MRLHHLGPDFPEALVDELLEGNVVFLCGAGVSAPQLPNFRDLVLNVYNRLGEERTPAEDHAFQASRYEEVLGALSRRLVRSEDVIDAAAAELQVPANPDTAHHDVILRLSRDQVGRPIIVTTNFDTLFERSLMVSHSAAFATQESAAGQDIPAPGSARFTGVVHTHGRLTDDELNLSQTELVLTSAQYGEAYLRAGWAARFLFDLMRCRTLVLVGYTANDAPVRYILNVLEGDRERFTDLRRVYALSSSNGDPQAAAAPWQALAVEPLLFDPEGGNPYGPLWSSLEGLANLVENPDVRRREMIAAIVSGPVSETTDHDIRTLKWALGARADLFEHFITRCEDAAWFDTLAVVIRAFGERARAWMLARWFARGWDDKVRYLTAIKHLGRGSQEFSDAVFRELDQNRPQDAIWEKAWRLLAEAAAAASHDSLRDYQLRHRLNRGPVVESDLGHLVNAIGPRLTIEAPFRDEDPSEHPNQLSDIARFSMESEHQEFLRDVLASPAGNAENILRLLERGSQRLSCQLRTARDAELIGQVRDVTDFGVPSVVNHQQNQHRRGFVPLTVFITSALPMAAQANLEGTKRVVGGWRAEPFNLTTRLWMHALTHQALFTADEAIEALATSNEAAFWSFALEFVAIVRARIAQASGEAVERLVRRLLVEGPQRYADREQNADGIDWQDRARDRDIWVRLTAISEHVVLPQEAETLLHEIRERRTYLSREIDERDLFRTWSSGVRAVRGRTAQIVSAQPSERLTIADRLEESSDIEDREGWVEYCREDPVGAYAALRSHPLEIGVVARWATWLEIIPSRANMTSPEWLRVIQEAVELLGEADDEIVIALVGPLARIAEHSRQLQLALPANWWDRLWQAAEGEPDVDWGDDVETYDRVINSTGGSLAEALLQAISSQRENGDDVNAADFQRLQRMIVSMTYSGEMARAACVRYLSFVFSVSNEIALDHLRPFIAADNDEGRRLRGVLVEYNSFVADTEISFADLILQGVRESRQKDVSAANAASHLVRAVVASFDEPNVVRGISPQQARQTLREAAADIRVGALKIMTNWLEENPDDERAAAWTDLYGPTFQAIWPRDRSYLSNDVSKEVFSLATAAGTAFEAAVEALLPYVSTFEDDWLSLHDLERNNAELATRFPVAALRLVWAACGPPCKGRTSDIAAILDAVAAANPALAVDRRMHKLRLLAVSH</sequence>
<name>Y4CA_SINFN</name>
<geneLocation type="plasmid">
    <name>sym pNGR234a</name>
</geneLocation>
<protein>
    <recommendedName>
        <fullName>Uncharacterized protein y4cA</fullName>
    </recommendedName>
</protein>
<gene>
    <name type="ordered locus">NGR_a00130</name>
    <name type="ORF">y4cA</name>
</gene>
<reference key="1">
    <citation type="journal article" date="1997" name="Nature">
        <title>Molecular basis of symbiosis between Rhizobium and legumes.</title>
        <authorList>
            <person name="Freiberg C.A."/>
            <person name="Fellay R."/>
            <person name="Bairoch A."/>
            <person name="Broughton W.J."/>
            <person name="Rosenthal A."/>
            <person name="Perret X."/>
        </authorList>
    </citation>
    <scope>NUCLEOTIDE SEQUENCE [LARGE SCALE GENOMIC DNA]</scope>
    <source>
        <strain>NBRC 101917 / NGR234</strain>
    </source>
</reference>
<reference key="2">
    <citation type="journal article" date="2009" name="Appl. Environ. Microbiol.">
        <title>Rhizobium sp. strain NGR234 possesses a remarkable number of secretion systems.</title>
        <authorList>
            <person name="Schmeisser C."/>
            <person name="Liesegang H."/>
            <person name="Krysciak D."/>
            <person name="Bakkou N."/>
            <person name="Le Quere A."/>
            <person name="Wollherr A."/>
            <person name="Heinemeyer I."/>
            <person name="Morgenstern B."/>
            <person name="Pommerening-Roeser A."/>
            <person name="Flores M."/>
            <person name="Palacios R."/>
            <person name="Brenner S."/>
            <person name="Gottschalk G."/>
            <person name="Schmitz R.A."/>
            <person name="Broughton W.J."/>
            <person name="Perret X."/>
            <person name="Strittmatter A.W."/>
            <person name="Streit W.R."/>
        </authorList>
    </citation>
    <scope>NUCLEOTIDE SEQUENCE [LARGE SCALE GENOMIC DNA]</scope>
    <source>
        <strain>NBRC 101917 / NGR234</strain>
    </source>
</reference>
<proteinExistence type="predicted"/>
<keyword id="KW-0614">Plasmid</keyword>
<keyword id="KW-1185">Reference proteome</keyword>
<dbReference type="EMBL" id="U00090">
    <property type="protein sequence ID" value="AAB91631.1"/>
    <property type="molecule type" value="Genomic_DNA"/>
</dbReference>
<dbReference type="PIR" id="T28628">
    <property type="entry name" value="T28628"/>
</dbReference>
<dbReference type="RefSeq" id="NP_443793.1">
    <property type="nucleotide sequence ID" value="NC_000914.2"/>
</dbReference>
<dbReference type="RefSeq" id="WP_010875056.1">
    <property type="nucleotide sequence ID" value="NC_000914.2"/>
</dbReference>
<dbReference type="KEGG" id="rhi:NGR_a00130"/>
<dbReference type="PATRIC" id="fig|394.7.peg.11"/>
<dbReference type="eggNOG" id="COG0846">
    <property type="taxonomic scope" value="Bacteria"/>
</dbReference>
<dbReference type="HOGENOM" id="CLU_267953_0_0_5"/>
<dbReference type="OrthoDB" id="2077946at2"/>
<dbReference type="Proteomes" id="UP000001054">
    <property type="component" value="Plasmid pNGR234a"/>
</dbReference>
<dbReference type="CDD" id="cd01406">
    <property type="entry name" value="SIR2-like"/>
    <property type="match status" value="1"/>
</dbReference>
<dbReference type="Gene3D" id="3.40.50.1220">
    <property type="entry name" value="TPP-binding domain"/>
    <property type="match status" value="1"/>
</dbReference>
<dbReference type="InterPro" id="IPR029035">
    <property type="entry name" value="DHS-like_NAD/FAD-binding_dom"/>
</dbReference>
<dbReference type="Pfam" id="PF13289">
    <property type="entry name" value="SIR2_2"/>
    <property type="match status" value="1"/>
</dbReference>
<dbReference type="SUPFAM" id="SSF52467">
    <property type="entry name" value="DHS-like NAD/FAD-binding domain"/>
    <property type="match status" value="1"/>
</dbReference>
<feature type="chain" id="PRO_0000200811" description="Uncharacterized protein y4cA">
    <location>
        <begin position="1"/>
        <end position="1197"/>
    </location>
</feature>